<dbReference type="EMBL" id="CP000111">
    <property type="protein sequence ID" value="ABB50503.1"/>
    <property type="molecule type" value="Genomic_DNA"/>
</dbReference>
<dbReference type="RefSeq" id="WP_011376987.1">
    <property type="nucleotide sequence ID" value="NC_007577.1"/>
</dbReference>
<dbReference type="SMR" id="Q319E2"/>
<dbReference type="STRING" id="74546.PMT9312_1443"/>
<dbReference type="KEGG" id="pmi:PMT9312_1443"/>
<dbReference type="eggNOG" id="COG0211">
    <property type="taxonomic scope" value="Bacteria"/>
</dbReference>
<dbReference type="HOGENOM" id="CLU_095424_4_0_3"/>
<dbReference type="OrthoDB" id="9803474at2"/>
<dbReference type="Proteomes" id="UP000002715">
    <property type="component" value="Chromosome"/>
</dbReference>
<dbReference type="GO" id="GO:0022625">
    <property type="term" value="C:cytosolic large ribosomal subunit"/>
    <property type="evidence" value="ECO:0007669"/>
    <property type="project" value="TreeGrafter"/>
</dbReference>
<dbReference type="GO" id="GO:0003735">
    <property type="term" value="F:structural constituent of ribosome"/>
    <property type="evidence" value="ECO:0007669"/>
    <property type="project" value="InterPro"/>
</dbReference>
<dbReference type="GO" id="GO:0006412">
    <property type="term" value="P:translation"/>
    <property type="evidence" value="ECO:0007669"/>
    <property type="project" value="UniProtKB-UniRule"/>
</dbReference>
<dbReference type="FunFam" id="2.40.50.100:FF:000020">
    <property type="entry name" value="50S ribosomal protein L27"/>
    <property type="match status" value="1"/>
</dbReference>
<dbReference type="Gene3D" id="2.40.50.100">
    <property type="match status" value="1"/>
</dbReference>
<dbReference type="HAMAP" id="MF_00539">
    <property type="entry name" value="Ribosomal_bL27"/>
    <property type="match status" value="1"/>
</dbReference>
<dbReference type="InterPro" id="IPR001684">
    <property type="entry name" value="Ribosomal_bL27"/>
</dbReference>
<dbReference type="InterPro" id="IPR018261">
    <property type="entry name" value="Ribosomal_bL27_CS"/>
</dbReference>
<dbReference type="NCBIfam" id="TIGR00062">
    <property type="entry name" value="L27"/>
    <property type="match status" value="1"/>
</dbReference>
<dbReference type="PANTHER" id="PTHR15893:SF0">
    <property type="entry name" value="LARGE RIBOSOMAL SUBUNIT PROTEIN BL27M"/>
    <property type="match status" value="1"/>
</dbReference>
<dbReference type="PANTHER" id="PTHR15893">
    <property type="entry name" value="RIBOSOMAL PROTEIN L27"/>
    <property type="match status" value="1"/>
</dbReference>
<dbReference type="Pfam" id="PF01016">
    <property type="entry name" value="Ribosomal_L27"/>
    <property type="match status" value="1"/>
</dbReference>
<dbReference type="PRINTS" id="PR00063">
    <property type="entry name" value="RIBOSOMALL27"/>
</dbReference>
<dbReference type="SUPFAM" id="SSF110324">
    <property type="entry name" value="Ribosomal L27 protein-like"/>
    <property type="match status" value="1"/>
</dbReference>
<dbReference type="PROSITE" id="PS00831">
    <property type="entry name" value="RIBOSOMAL_L27"/>
    <property type="match status" value="1"/>
</dbReference>
<keyword id="KW-0687">Ribonucleoprotein</keyword>
<keyword id="KW-0689">Ribosomal protein</keyword>
<name>RL27_PROM9</name>
<accession>Q319E2</accession>
<feature type="chain" id="PRO_1000017552" description="Large ribosomal subunit protein bL27">
    <location>
        <begin position="1"/>
        <end position="86"/>
    </location>
</feature>
<feature type="region of interest" description="Disordered" evidence="2">
    <location>
        <begin position="1"/>
        <end position="24"/>
    </location>
</feature>
<proteinExistence type="inferred from homology"/>
<organism>
    <name type="scientific">Prochlorococcus marinus (strain MIT 9312)</name>
    <dbReference type="NCBI Taxonomy" id="74546"/>
    <lineage>
        <taxon>Bacteria</taxon>
        <taxon>Bacillati</taxon>
        <taxon>Cyanobacteriota</taxon>
        <taxon>Cyanophyceae</taxon>
        <taxon>Synechococcales</taxon>
        <taxon>Prochlorococcaceae</taxon>
        <taxon>Prochlorococcus</taxon>
    </lineage>
</organism>
<comment type="similarity">
    <text evidence="1">Belongs to the bacterial ribosomal protein bL27 family.</text>
</comment>
<sequence>MAHKKGTGSTRNGRDSNSKRLGVKAYGGEKVTAGSILIRQRGTSFLPGINVGKGKDDTLFALKEGTVSFESIKRNLRNRKRVNVVI</sequence>
<reference key="1">
    <citation type="journal article" date="2006" name="Science">
        <title>Genomic islands and the ecology and evolution of Prochlorococcus.</title>
        <authorList>
            <person name="Coleman M.L."/>
            <person name="Sullivan M.B."/>
            <person name="Martiny A.C."/>
            <person name="Steglich C."/>
            <person name="Barry K."/>
            <person name="Delong E.F."/>
            <person name="Chisholm S.W."/>
        </authorList>
    </citation>
    <scope>NUCLEOTIDE SEQUENCE [LARGE SCALE GENOMIC DNA]</scope>
    <source>
        <strain>MIT 9312</strain>
    </source>
</reference>
<protein>
    <recommendedName>
        <fullName evidence="1">Large ribosomal subunit protein bL27</fullName>
    </recommendedName>
    <alternativeName>
        <fullName evidence="3">50S ribosomal protein L27</fullName>
    </alternativeName>
</protein>
<gene>
    <name evidence="1" type="primary">rpmA</name>
    <name evidence="1" type="synonym">rpl27</name>
    <name type="ordered locus">PMT9312_1443</name>
</gene>
<evidence type="ECO:0000255" key="1">
    <source>
        <dbReference type="HAMAP-Rule" id="MF_00539"/>
    </source>
</evidence>
<evidence type="ECO:0000256" key="2">
    <source>
        <dbReference type="SAM" id="MobiDB-lite"/>
    </source>
</evidence>
<evidence type="ECO:0000305" key="3"/>